<name>DXR_ANASK</name>
<dbReference type="EC" id="1.1.1.267" evidence="1"/>
<dbReference type="EMBL" id="CP001131">
    <property type="protein sequence ID" value="ACG74861.1"/>
    <property type="molecule type" value="Genomic_DNA"/>
</dbReference>
<dbReference type="RefSeq" id="WP_012527630.1">
    <property type="nucleotide sequence ID" value="NC_011145.1"/>
</dbReference>
<dbReference type="SMR" id="B4UD63"/>
<dbReference type="KEGG" id="ank:AnaeK_3649"/>
<dbReference type="HOGENOM" id="CLU_035714_4_0_7"/>
<dbReference type="OrthoDB" id="9806546at2"/>
<dbReference type="UniPathway" id="UPA00056">
    <property type="reaction ID" value="UER00092"/>
</dbReference>
<dbReference type="Proteomes" id="UP000001871">
    <property type="component" value="Chromosome"/>
</dbReference>
<dbReference type="GO" id="GO:0030604">
    <property type="term" value="F:1-deoxy-D-xylulose-5-phosphate reductoisomerase activity"/>
    <property type="evidence" value="ECO:0007669"/>
    <property type="project" value="UniProtKB-UniRule"/>
</dbReference>
<dbReference type="GO" id="GO:0030145">
    <property type="term" value="F:manganese ion binding"/>
    <property type="evidence" value="ECO:0007669"/>
    <property type="project" value="TreeGrafter"/>
</dbReference>
<dbReference type="GO" id="GO:0070402">
    <property type="term" value="F:NADPH binding"/>
    <property type="evidence" value="ECO:0007669"/>
    <property type="project" value="InterPro"/>
</dbReference>
<dbReference type="GO" id="GO:0051484">
    <property type="term" value="P:isopentenyl diphosphate biosynthetic process, methylerythritol 4-phosphate pathway involved in terpenoid biosynthetic process"/>
    <property type="evidence" value="ECO:0007669"/>
    <property type="project" value="TreeGrafter"/>
</dbReference>
<dbReference type="FunFam" id="3.40.50.720:FF:000045">
    <property type="entry name" value="1-deoxy-D-xylulose 5-phosphate reductoisomerase"/>
    <property type="match status" value="1"/>
</dbReference>
<dbReference type="Gene3D" id="1.10.1740.10">
    <property type="match status" value="1"/>
</dbReference>
<dbReference type="Gene3D" id="3.40.50.720">
    <property type="entry name" value="NAD(P)-binding Rossmann-like Domain"/>
    <property type="match status" value="1"/>
</dbReference>
<dbReference type="HAMAP" id="MF_00183">
    <property type="entry name" value="DXP_reductoisom"/>
    <property type="match status" value="1"/>
</dbReference>
<dbReference type="InterPro" id="IPR003821">
    <property type="entry name" value="DXP_reductoisomerase"/>
</dbReference>
<dbReference type="InterPro" id="IPR013644">
    <property type="entry name" value="DXP_reductoisomerase_C"/>
</dbReference>
<dbReference type="InterPro" id="IPR013512">
    <property type="entry name" value="DXP_reductoisomerase_N"/>
</dbReference>
<dbReference type="InterPro" id="IPR026877">
    <property type="entry name" value="DXPR_C"/>
</dbReference>
<dbReference type="InterPro" id="IPR036169">
    <property type="entry name" value="DXPR_C_sf"/>
</dbReference>
<dbReference type="InterPro" id="IPR036291">
    <property type="entry name" value="NAD(P)-bd_dom_sf"/>
</dbReference>
<dbReference type="NCBIfam" id="TIGR00243">
    <property type="entry name" value="Dxr"/>
    <property type="match status" value="1"/>
</dbReference>
<dbReference type="PANTHER" id="PTHR30525">
    <property type="entry name" value="1-DEOXY-D-XYLULOSE 5-PHOSPHATE REDUCTOISOMERASE"/>
    <property type="match status" value="1"/>
</dbReference>
<dbReference type="PANTHER" id="PTHR30525:SF0">
    <property type="entry name" value="1-DEOXY-D-XYLULOSE 5-PHOSPHATE REDUCTOISOMERASE, CHLOROPLASTIC"/>
    <property type="match status" value="1"/>
</dbReference>
<dbReference type="Pfam" id="PF08436">
    <property type="entry name" value="DXP_redisom_C"/>
    <property type="match status" value="1"/>
</dbReference>
<dbReference type="Pfam" id="PF02670">
    <property type="entry name" value="DXP_reductoisom"/>
    <property type="match status" value="1"/>
</dbReference>
<dbReference type="Pfam" id="PF13288">
    <property type="entry name" value="DXPR_C"/>
    <property type="match status" value="1"/>
</dbReference>
<dbReference type="PIRSF" id="PIRSF006205">
    <property type="entry name" value="Dxp_reductismrs"/>
    <property type="match status" value="1"/>
</dbReference>
<dbReference type="SUPFAM" id="SSF69055">
    <property type="entry name" value="1-deoxy-D-xylulose-5-phosphate reductoisomerase, C-terminal domain"/>
    <property type="match status" value="1"/>
</dbReference>
<dbReference type="SUPFAM" id="SSF55347">
    <property type="entry name" value="Glyceraldehyde-3-phosphate dehydrogenase-like, C-terminal domain"/>
    <property type="match status" value="1"/>
</dbReference>
<dbReference type="SUPFAM" id="SSF51735">
    <property type="entry name" value="NAD(P)-binding Rossmann-fold domains"/>
    <property type="match status" value="1"/>
</dbReference>
<keyword id="KW-0414">Isoprene biosynthesis</keyword>
<keyword id="KW-0464">Manganese</keyword>
<keyword id="KW-0479">Metal-binding</keyword>
<keyword id="KW-0521">NADP</keyword>
<keyword id="KW-0560">Oxidoreductase</keyword>
<protein>
    <recommendedName>
        <fullName evidence="1">1-deoxy-D-xylulose 5-phosphate reductoisomerase</fullName>
        <shortName evidence="1">DXP reductoisomerase</shortName>
        <ecNumber evidence="1">1.1.1.267</ecNumber>
    </recommendedName>
    <alternativeName>
        <fullName evidence="1">1-deoxyxylulose-5-phosphate reductoisomerase</fullName>
    </alternativeName>
    <alternativeName>
        <fullName evidence="1">2-C-methyl-D-erythritol 4-phosphate synthase</fullName>
    </alternativeName>
</protein>
<evidence type="ECO:0000255" key="1">
    <source>
        <dbReference type="HAMAP-Rule" id="MF_00183"/>
    </source>
</evidence>
<evidence type="ECO:0000256" key="2">
    <source>
        <dbReference type="SAM" id="MobiDB-lite"/>
    </source>
</evidence>
<organism>
    <name type="scientific">Anaeromyxobacter sp. (strain K)</name>
    <dbReference type="NCBI Taxonomy" id="447217"/>
    <lineage>
        <taxon>Bacteria</taxon>
        <taxon>Pseudomonadati</taxon>
        <taxon>Myxococcota</taxon>
        <taxon>Myxococcia</taxon>
        <taxon>Myxococcales</taxon>
        <taxon>Cystobacterineae</taxon>
        <taxon>Anaeromyxobacteraceae</taxon>
        <taxon>Anaeromyxobacter</taxon>
    </lineage>
</organism>
<comment type="function">
    <text evidence="1">Catalyzes the NADPH-dependent rearrangement and reduction of 1-deoxy-D-xylulose-5-phosphate (DXP) to 2-C-methyl-D-erythritol 4-phosphate (MEP).</text>
</comment>
<comment type="catalytic activity">
    <reaction evidence="1">
        <text>2-C-methyl-D-erythritol 4-phosphate + NADP(+) = 1-deoxy-D-xylulose 5-phosphate + NADPH + H(+)</text>
        <dbReference type="Rhea" id="RHEA:13717"/>
        <dbReference type="ChEBI" id="CHEBI:15378"/>
        <dbReference type="ChEBI" id="CHEBI:57783"/>
        <dbReference type="ChEBI" id="CHEBI:57792"/>
        <dbReference type="ChEBI" id="CHEBI:58262"/>
        <dbReference type="ChEBI" id="CHEBI:58349"/>
        <dbReference type="EC" id="1.1.1.267"/>
    </reaction>
    <physiologicalReaction direction="right-to-left" evidence="1">
        <dbReference type="Rhea" id="RHEA:13719"/>
    </physiologicalReaction>
</comment>
<comment type="cofactor">
    <cofactor evidence="1">
        <name>Mg(2+)</name>
        <dbReference type="ChEBI" id="CHEBI:18420"/>
    </cofactor>
    <cofactor evidence="1">
        <name>Mn(2+)</name>
        <dbReference type="ChEBI" id="CHEBI:29035"/>
    </cofactor>
</comment>
<comment type="pathway">
    <text evidence="1">Isoprenoid biosynthesis; isopentenyl diphosphate biosynthesis via DXP pathway; isopentenyl diphosphate from 1-deoxy-D-xylulose 5-phosphate: step 1/6.</text>
</comment>
<comment type="similarity">
    <text evidence="1">Belongs to the DXR family.</text>
</comment>
<feature type="chain" id="PRO_1000118491" description="1-deoxy-D-xylulose 5-phosphate reductoisomerase">
    <location>
        <begin position="1"/>
        <end position="390"/>
    </location>
</feature>
<feature type="region of interest" description="Disordered" evidence="2">
    <location>
        <begin position="367"/>
        <end position="390"/>
    </location>
</feature>
<feature type="compositionally biased region" description="Basic and acidic residues" evidence="2">
    <location>
        <begin position="370"/>
        <end position="380"/>
    </location>
</feature>
<feature type="binding site" evidence="1">
    <location>
        <position position="10"/>
    </location>
    <ligand>
        <name>NADPH</name>
        <dbReference type="ChEBI" id="CHEBI:57783"/>
    </ligand>
</feature>
<feature type="binding site" evidence="1">
    <location>
        <position position="11"/>
    </location>
    <ligand>
        <name>NADPH</name>
        <dbReference type="ChEBI" id="CHEBI:57783"/>
    </ligand>
</feature>
<feature type="binding site" evidence="1">
    <location>
        <position position="12"/>
    </location>
    <ligand>
        <name>NADPH</name>
        <dbReference type="ChEBI" id="CHEBI:57783"/>
    </ligand>
</feature>
<feature type="binding site" evidence="1">
    <location>
        <position position="13"/>
    </location>
    <ligand>
        <name>NADPH</name>
        <dbReference type="ChEBI" id="CHEBI:57783"/>
    </ligand>
</feature>
<feature type="binding site" evidence="1">
    <location>
        <position position="36"/>
    </location>
    <ligand>
        <name>NADPH</name>
        <dbReference type="ChEBI" id="CHEBI:57783"/>
    </ligand>
</feature>
<feature type="binding site" evidence="1">
    <location>
        <position position="37"/>
    </location>
    <ligand>
        <name>NADPH</name>
        <dbReference type="ChEBI" id="CHEBI:57783"/>
    </ligand>
</feature>
<feature type="binding site" evidence="1">
    <location>
        <position position="38"/>
    </location>
    <ligand>
        <name>NADPH</name>
        <dbReference type="ChEBI" id="CHEBI:57783"/>
    </ligand>
</feature>
<feature type="binding site" evidence="1">
    <location>
        <position position="121"/>
    </location>
    <ligand>
        <name>NADPH</name>
        <dbReference type="ChEBI" id="CHEBI:57783"/>
    </ligand>
</feature>
<feature type="binding site" evidence="1">
    <location>
        <position position="122"/>
    </location>
    <ligand>
        <name>1-deoxy-D-xylulose 5-phosphate</name>
        <dbReference type="ChEBI" id="CHEBI:57792"/>
    </ligand>
</feature>
<feature type="binding site" evidence="1">
    <location>
        <position position="123"/>
    </location>
    <ligand>
        <name>NADPH</name>
        <dbReference type="ChEBI" id="CHEBI:57783"/>
    </ligand>
</feature>
<feature type="binding site" evidence="1">
    <location>
        <position position="147"/>
    </location>
    <ligand>
        <name>Mn(2+)</name>
        <dbReference type="ChEBI" id="CHEBI:29035"/>
    </ligand>
</feature>
<feature type="binding site" evidence="1">
    <location>
        <position position="148"/>
    </location>
    <ligand>
        <name>1-deoxy-D-xylulose 5-phosphate</name>
        <dbReference type="ChEBI" id="CHEBI:57792"/>
    </ligand>
</feature>
<feature type="binding site" evidence="1">
    <location>
        <position position="149"/>
    </location>
    <ligand>
        <name>1-deoxy-D-xylulose 5-phosphate</name>
        <dbReference type="ChEBI" id="CHEBI:57792"/>
    </ligand>
</feature>
<feature type="binding site" evidence="1">
    <location>
        <position position="149"/>
    </location>
    <ligand>
        <name>Mn(2+)</name>
        <dbReference type="ChEBI" id="CHEBI:29035"/>
    </ligand>
</feature>
<feature type="binding site" evidence="1">
    <location>
        <position position="173"/>
    </location>
    <ligand>
        <name>1-deoxy-D-xylulose 5-phosphate</name>
        <dbReference type="ChEBI" id="CHEBI:57792"/>
    </ligand>
</feature>
<feature type="binding site" evidence="1">
    <location>
        <position position="196"/>
    </location>
    <ligand>
        <name>1-deoxy-D-xylulose 5-phosphate</name>
        <dbReference type="ChEBI" id="CHEBI:57792"/>
    </ligand>
</feature>
<feature type="binding site" evidence="1">
    <location>
        <position position="202"/>
    </location>
    <ligand>
        <name>NADPH</name>
        <dbReference type="ChEBI" id="CHEBI:57783"/>
    </ligand>
</feature>
<feature type="binding site" evidence="1">
    <location>
        <position position="209"/>
    </location>
    <ligand>
        <name>1-deoxy-D-xylulose 5-phosphate</name>
        <dbReference type="ChEBI" id="CHEBI:57792"/>
    </ligand>
</feature>
<feature type="binding site" evidence="1">
    <location>
        <position position="214"/>
    </location>
    <ligand>
        <name>1-deoxy-D-xylulose 5-phosphate</name>
        <dbReference type="ChEBI" id="CHEBI:57792"/>
    </ligand>
</feature>
<feature type="binding site" evidence="1">
    <location>
        <position position="215"/>
    </location>
    <ligand>
        <name>1-deoxy-D-xylulose 5-phosphate</name>
        <dbReference type="ChEBI" id="CHEBI:57792"/>
    </ligand>
</feature>
<feature type="binding site" evidence="1">
    <location>
        <position position="218"/>
    </location>
    <ligand>
        <name>1-deoxy-D-xylulose 5-phosphate</name>
        <dbReference type="ChEBI" id="CHEBI:57792"/>
    </ligand>
</feature>
<feature type="binding site" evidence="1">
    <location>
        <position position="218"/>
    </location>
    <ligand>
        <name>Mn(2+)</name>
        <dbReference type="ChEBI" id="CHEBI:29035"/>
    </ligand>
</feature>
<sequence length="390" mass="40997">MKRVAILGSTGSIGVQALDVVGRFPDRFEVVGLAAGRNAPRLLEQIRRFRPRVVSVCDEAAARAVRAEAPPGTEVLSGDAGAVAVASHPDAAFVLAAISGGAGLRSTAAAIEAGKPVGLANKESMVLAGELLMARAAAKGVPILPVDSEHSAIHQSLVGHNRGEVRRLILTASGGPLRCTPEAELATVTPERALKHPNWSMGDKITIDSATLMNKGLEVIEARWLFGVEQQRIDIVVHPESVVHSMVEYVDGSIVAQLGISDMRGPISYAMGHPERMPLDLPPLDLGRLGKLTFEPPDPARFPAYTLAYRALELGGTAPAVLSGADEAAVAAFLARRCSFTGIAEVCADVLEAHVVEPVRSVEQALAASEHGRREAEKRVGARAHAPAGR</sequence>
<proteinExistence type="inferred from homology"/>
<gene>
    <name evidence="1" type="primary">dxr</name>
    <name type="ordered locus">AnaeK_3649</name>
</gene>
<reference key="1">
    <citation type="submission" date="2008-08" db="EMBL/GenBank/DDBJ databases">
        <title>Complete sequence of Anaeromyxobacter sp. K.</title>
        <authorList>
            <consortium name="US DOE Joint Genome Institute"/>
            <person name="Lucas S."/>
            <person name="Copeland A."/>
            <person name="Lapidus A."/>
            <person name="Glavina del Rio T."/>
            <person name="Dalin E."/>
            <person name="Tice H."/>
            <person name="Bruce D."/>
            <person name="Goodwin L."/>
            <person name="Pitluck S."/>
            <person name="Saunders E."/>
            <person name="Brettin T."/>
            <person name="Detter J.C."/>
            <person name="Han C."/>
            <person name="Larimer F."/>
            <person name="Land M."/>
            <person name="Hauser L."/>
            <person name="Kyrpides N."/>
            <person name="Ovchinnikiva G."/>
            <person name="Beliaev A."/>
        </authorList>
    </citation>
    <scope>NUCLEOTIDE SEQUENCE [LARGE SCALE GENOMIC DNA]</scope>
    <source>
        <strain>K</strain>
    </source>
</reference>
<accession>B4UD63</accession>